<comment type="miscellaneous">
    <text>The initiator methionine may be removed.</text>
</comment>
<comment type="similarity">
    <text evidence="1">Belongs to the universal ribosomal protein uS9 family.</text>
</comment>
<proteinExistence type="evidence at protein level"/>
<sequence>MSETMQSLDQLAALKTTVTGADAPTYTKKVDKFGRAYATGKRKDAVARVWIKPGAGKITVNSREVETYFARPVLRMMIQQPLVAAARAGQYDVICTVAGGGLSGQAGAVRHGISKALTNFEPELRSVLKKGGFLTRDSRVVERKKYGKAKARRSFQFSKR</sequence>
<evidence type="ECO:0000255" key="1">
    <source>
        <dbReference type="HAMAP-Rule" id="MF_00532"/>
    </source>
</evidence>
<evidence type="ECO:0000305" key="2"/>
<feature type="chain" id="PRO_0000224164" description="Small ribosomal subunit protein uS9">
    <location>
        <begin position="1"/>
        <end position="159"/>
    </location>
</feature>
<name>RS9_RHOPA</name>
<reference key="1">
    <citation type="journal article" date="2004" name="Nat. Biotechnol.">
        <title>Complete genome sequence of the metabolically versatile photosynthetic bacterium Rhodopseudomonas palustris.</title>
        <authorList>
            <person name="Larimer F.W."/>
            <person name="Chain P."/>
            <person name="Hauser L."/>
            <person name="Lamerdin J.E."/>
            <person name="Malfatti S."/>
            <person name="Do L."/>
            <person name="Land M.L."/>
            <person name="Pelletier D.A."/>
            <person name="Beatty J.T."/>
            <person name="Lang A.S."/>
            <person name="Tabita F.R."/>
            <person name="Gibson J.L."/>
            <person name="Hanson T.E."/>
            <person name="Bobst C."/>
            <person name="Torres y Torres J.L."/>
            <person name="Peres C."/>
            <person name="Harrison F.H."/>
            <person name="Gibson J."/>
            <person name="Harwood C.S."/>
        </authorList>
    </citation>
    <scope>NUCLEOTIDE SEQUENCE [LARGE SCALE GENOMIC DNA]</scope>
    <source>
        <strain>ATCC BAA-98 / CGA009</strain>
    </source>
</reference>
<reference key="2">
    <citation type="journal article" date="2004" name="J. Proteome Res.">
        <title>Characterization of the 70S ribosome from Rhodopseudomonas palustris using an integrated 'top-down' and 'bottom-up' mass spectrometric approach.</title>
        <authorList>
            <person name="Strader M.B."/>
            <person name="VerBerkmoes N.C."/>
            <person name="Tabb D.L."/>
            <person name="Connelly H.M."/>
            <person name="Barton J.W."/>
            <person name="Bruce B.D."/>
            <person name="Pelletier D.A."/>
            <person name="Davison B.H."/>
            <person name="Hettich R.L."/>
            <person name="Larimer F.W."/>
            <person name="Hurst G.B."/>
        </authorList>
    </citation>
    <scope>IDENTIFICATION BY MASS SPECTROMETRY</scope>
    <source>
        <strain>ATCC BAA-98 / CGA009</strain>
    </source>
</reference>
<dbReference type="EMBL" id="BX572601">
    <property type="protein sequence ID" value="CAE28210.1"/>
    <property type="molecule type" value="Genomic_DNA"/>
</dbReference>
<dbReference type="RefSeq" id="WP_011158319.1">
    <property type="nucleotide sequence ID" value="NZ_CP116810.1"/>
</dbReference>
<dbReference type="SMR" id="Q6N650"/>
<dbReference type="IntAct" id="Q6N650">
    <property type="interactions" value="1"/>
</dbReference>
<dbReference type="STRING" id="258594.RPA2768"/>
<dbReference type="GeneID" id="66893845"/>
<dbReference type="eggNOG" id="COG0103">
    <property type="taxonomic scope" value="Bacteria"/>
</dbReference>
<dbReference type="HOGENOM" id="CLU_046483_2_0_5"/>
<dbReference type="PhylomeDB" id="Q6N650"/>
<dbReference type="GO" id="GO:0022627">
    <property type="term" value="C:cytosolic small ribosomal subunit"/>
    <property type="evidence" value="ECO:0007669"/>
    <property type="project" value="TreeGrafter"/>
</dbReference>
<dbReference type="GO" id="GO:0003723">
    <property type="term" value="F:RNA binding"/>
    <property type="evidence" value="ECO:0007669"/>
    <property type="project" value="TreeGrafter"/>
</dbReference>
<dbReference type="GO" id="GO:0003735">
    <property type="term" value="F:structural constituent of ribosome"/>
    <property type="evidence" value="ECO:0007669"/>
    <property type="project" value="InterPro"/>
</dbReference>
<dbReference type="GO" id="GO:0006412">
    <property type="term" value="P:translation"/>
    <property type="evidence" value="ECO:0007669"/>
    <property type="project" value="UniProtKB-UniRule"/>
</dbReference>
<dbReference type="FunFam" id="3.30.230.10:FF:000034">
    <property type="entry name" value="30S ribosomal protein S9"/>
    <property type="match status" value="1"/>
</dbReference>
<dbReference type="Gene3D" id="3.30.230.10">
    <property type="match status" value="1"/>
</dbReference>
<dbReference type="HAMAP" id="MF_00532_B">
    <property type="entry name" value="Ribosomal_uS9_B"/>
    <property type="match status" value="1"/>
</dbReference>
<dbReference type="InterPro" id="IPR020568">
    <property type="entry name" value="Ribosomal_Su5_D2-typ_SF"/>
</dbReference>
<dbReference type="InterPro" id="IPR000754">
    <property type="entry name" value="Ribosomal_uS9"/>
</dbReference>
<dbReference type="InterPro" id="IPR023035">
    <property type="entry name" value="Ribosomal_uS9_bac/plastid"/>
</dbReference>
<dbReference type="InterPro" id="IPR020574">
    <property type="entry name" value="Ribosomal_uS9_CS"/>
</dbReference>
<dbReference type="InterPro" id="IPR014721">
    <property type="entry name" value="Ribsml_uS5_D2-typ_fold_subgr"/>
</dbReference>
<dbReference type="NCBIfam" id="NF001099">
    <property type="entry name" value="PRK00132.1"/>
    <property type="match status" value="1"/>
</dbReference>
<dbReference type="PANTHER" id="PTHR21569">
    <property type="entry name" value="RIBOSOMAL PROTEIN S9"/>
    <property type="match status" value="1"/>
</dbReference>
<dbReference type="PANTHER" id="PTHR21569:SF1">
    <property type="entry name" value="SMALL RIBOSOMAL SUBUNIT PROTEIN US9M"/>
    <property type="match status" value="1"/>
</dbReference>
<dbReference type="Pfam" id="PF00380">
    <property type="entry name" value="Ribosomal_S9"/>
    <property type="match status" value="1"/>
</dbReference>
<dbReference type="SUPFAM" id="SSF54211">
    <property type="entry name" value="Ribosomal protein S5 domain 2-like"/>
    <property type="match status" value="1"/>
</dbReference>
<dbReference type="PROSITE" id="PS00360">
    <property type="entry name" value="RIBOSOMAL_S9"/>
    <property type="match status" value="1"/>
</dbReference>
<organism>
    <name type="scientific">Rhodopseudomonas palustris (strain ATCC BAA-98 / CGA009)</name>
    <dbReference type="NCBI Taxonomy" id="258594"/>
    <lineage>
        <taxon>Bacteria</taxon>
        <taxon>Pseudomonadati</taxon>
        <taxon>Pseudomonadota</taxon>
        <taxon>Alphaproteobacteria</taxon>
        <taxon>Hyphomicrobiales</taxon>
        <taxon>Nitrobacteraceae</taxon>
        <taxon>Rhodopseudomonas</taxon>
    </lineage>
</organism>
<keyword id="KW-0687">Ribonucleoprotein</keyword>
<keyword id="KW-0689">Ribosomal protein</keyword>
<protein>
    <recommendedName>
        <fullName evidence="1">Small ribosomal subunit protein uS9</fullName>
    </recommendedName>
    <alternativeName>
        <fullName evidence="2">30S ribosomal protein S9</fullName>
    </alternativeName>
    <alternativeName>
        <fullName>RRP-S9</fullName>
    </alternativeName>
</protein>
<accession>Q6N650</accession>
<gene>
    <name evidence="1" type="primary">rpsI</name>
    <name type="ordered locus">RPA2768</name>
</gene>